<dbReference type="EMBL" id="AE015451">
    <property type="protein sequence ID" value="AAN70585.1"/>
    <property type="molecule type" value="Genomic_DNA"/>
</dbReference>
<dbReference type="RefSeq" id="NP_747121.1">
    <property type="nucleotide sequence ID" value="NC_002947.4"/>
</dbReference>
<dbReference type="RefSeq" id="WP_010955579.1">
    <property type="nucleotide sequence ID" value="NC_002947.4"/>
</dbReference>
<dbReference type="SMR" id="Q88D09"/>
<dbReference type="STRING" id="160488.PP_5020"/>
<dbReference type="PaxDb" id="160488-PP_5020"/>
<dbReference type="KEGG" id="ppu:PP_5020"/>
<dbReference type="PATRIC" id="fig|160488.4.peg.5361"/>
<dbReference type="eggNOG" id="COG0840">
    <property type="taxonomic scope" value="Bacteria"/>
</dbReference>
<dbReference type="HOGENOM" id="CLU_000445_107_27_6"/>
<dbReference type="OrthoDB" id="6434013at2"/>
<dbReference type="PhylomeDB" id="Q88D09"/>
<dbReference type="BioCyc" id="PPUT160488:G1G01-5365-MONOMER"/>
<dbReference type="Proteomes" id="UP000000556">
    <property type="component" value="Chromosome"/>
</dbReference>
<dbReference type="GO" id="GO:0005886">
    <property type="term" value="C:plasma membrane"/>
    <property type="evidence" value="ECO:0007669"/>
    <property type="project" value="UniProtKB-SubCell"/>
</dbReference>
<dbReference type="GO" id="GO:0006935">
    <property type="term" value="P:chemotaxis"/>
    <property type="evidence" value="ECO:0007669"/>
    <property type="project" value="UniProtKB-KW"/>
</dbReference>
<dbReference type="GO" id="GO:0007165">
    <property type="term" value="P:signal transduction"/>
    <property type="evidence" value="ECO:0007669"/>
    <property type="project" value="UniProtKB-KW"/>
</dbReference>
<dbReference type="CDD" id="cd06225">
    <property type="entry name" value="HAMP"/>
    <property type="match status" value="1"/>
</dbReference>
<dbReference type="CDD" id="cd11386">
    <property type="entry name" value="MCP_signal"/>
    <property type="match status" value="1"/>
</dbReference>
<dbReference type="FunFam" id="1.10.287.950:FF:000001">
    <property type="entry name" value="Methyl-accepting chemotaxis sensory transducer"/>
    <property type="match status" value="1"/>
</dbReference>
<dbReference type="Gene3D" id="1.20.1440.210">
    <property type="match status" value="2"/>
</dbReference>
<dbReference type="Gene3D" id="1.10.287.950">
    <property type="entry name" value="Methyl-accepting chemotaxis protein"/>
    <property type="match status" value="1"/>
</dbReference>
<dbReference type="InterPro" id="IPR003660">
    <property type="entry name" value="HAMP_dom"/>
</dbReference>
<dbReference type="InterPro" id="IPR032255">
    <property type="entry name" value="HBM"/>
</dbReference>
<dbReference type="InterPro" id="IPR004089">
    <property type="entry name" value="MCPsignal_dom"/>
</dbReference>
<dbReference type="PANTHER" id="PTHR32089">
    <property type="entry name" value="METHYL-ACCEPTING CHEMOTAXIS PROTEIN MCPB"/>
    <property type="match status" value="1"/>
</dbReference>
<dbReference type="PANTHER" id="PTHR32089:SF120">
    <property type="entry name" value="METHYL-ACCEPTING CHEMOTAXIS PROTEIN TLPQ"/>
    <property type="match status" value="1"/>
</dbReference>
<dbReference type="Pfam" id="PF00672">
    <property type="entry name" value="HAMP"/>
    <property type="match status" value="1"/>
</dbReference>
<dbReference type="Pfam" id="PF16591">
    <property type="entry name" value="HBM"/>
    <property type="match status" value="1"/>
</dbReference>
<dbReference type="Pfam" id="PF00015">
    <property type="entry name" value="MCPsignal"/>
    <property type="match status" value="1"/>
</dbReference>
<dbReference type="SMART" id="SM00304">
    <property type="entry name" value="HAMP"/>
    <property type="match status" value="2"/>
</dbReference>
<dbReference type="SMART" id="SM01358">
    <property type="entry name" value="HBM"/>
    <property type="match status" value="1"/>
</dbReference>
<dbReference type="SMART" id="SM00283">
    <property type="entry name" value="MA"/>
    <property type="match status" value="1"/>
</dbReference>
<dbReference type="SUPFAM" id="SSF58104">
    <property type="entry name" value="Methyl-accepting chemotaxis protein (MCP) signaling domain"/>
    <property type="match status" value="1"/>
</dbReference>
<dbReference type="PROSITE" id="PS50111">
    <property type="entry name" value="CHEMOTAXIS_TRANSDUC_2"/>
    <property type="match status" value="1"/>
</dbReference>
<dbReference type="PROSITE" id="PS50885">
    <property type="entry name" value="HAMP"/>
    <property type="match status" value="1"/>
</dbReference>
<dbReference type="PROSITE" id="PS51753">
    <property type="entry name" value="HBM"/>
    <property type="match status" value="1"/>
</dbReference>
<reference key="1">
    <citation type="journal article" date="2002" name="Environ. Microbiol.">
        <title>Complete genome sequence and comparative analysis of the metabolically versatile Pseudomonas putida KT2440.</title>
        <authorList>
            <person name="Nelson K.E."/>
            <person name="Weinel C."/>
            <person name="Paulsen I.T."/>
            <person name="Dodson R.J."/>
            <person name="Hilbert H."/>
            <person name="Martins dos Santos V.A.P."/>
            <person name="Fouts D.E."/>
            <person name="Gill S.R."/>
            <person name="Pop M."/>
            <person name="Holmes M."/>
            <person name="Brinkac L.M."/>
            <person name="Beanan M.J."/>
            <person name="DeBoy R.T."/>
            <person name="Daugherty S.C."/>
            <person name="Kolonay J.F."/>
            <person name="Madupu R."/>
            <person name="Nelson W.C."/>
            <person name="White O."/>
            <person name="Peterson J.D."/>
            <person name="Khouri H.M."/>
            <person name="Hance I."/>
            <person name="Chris Lee P."/>
            <person name="Holtzapple E.K."/>
            <person name="Scanlan D."/>
            <person name="Tran K."/>
            <person name="Moazzez A."/>
            <person name="Utterback T.R."/>
            <person name="Rizzo M."/>
            <person name="Lee K."/>
            <person name="Kosack D."/>
            <person name="Moestl D."/>
            <person name="Wedler H."/>
            <person name="Lauber J."/>
            <person name="Stjepandic D."/>
            <person name="Hoheisel J."/>
            <person name="Straetz M."/>
            <person name="Heim S."/>
            <person name="Kiewitz C."/>
            <person name="Eisen J.A."/>
            <person name="Timmis K.N."/>
            <person name="Duesterhoeft A."/>
            <person name="Tuemmler B."/>
            <person name="Fraser C.M."/>
        </authorList>
    </citation>
    <scope>NUCLEOTIDE SEQUENCE [LARGE SCALE GENOMIC DNA]</scope>
    <source>
        <strain>ATCC 47054 / DSM 6125 / CFBP 8728 / NCIMB 11950 / KT2440</strain>
    </source>
</reference>
<reference key="2">
    <citation type="journal article" date="2016" name="Environ. Microbiol.">
        <title>McpQ is a specific citrate chemoreceptor that responds preferentially to citrate/metal ion complexes.</title>
        <authorList>
            <person name="Martin-Mora D."/>
            <person name="Reyes-Darias J.A."/>
            <person name="Ortega A."/>
            <person name="Corral-Lugo A."/>
            <person name="Matilla M.A."/>
            <person name="Krell T."/>
        </authorList>
    </citation>
    <scope>FUNCTION AS A CHEMORECEPTOR</scope>
    <scope>DISRUPTION PHENOTYPE</scope>
    <source>
        <strain>ATCC 47054 / DSM 6125 / CFBP 8728 / NCIMB 11950 / KT2440</strain>
    </source>
</reference>
<evidence type="ECO:0000255" key="1"/>
<evidence type="ECO:0000255" key="2">
    <source>
        <dbReference type="PROSITE-ProRule" id="PRU00102"/>
    </source>
</evidence>
<evidence type="ECO:0000255" key="3">
    <source>
        <dbReference type="PROSITE-ProRule" id="PRU00284"/>
    </source>
</evidence>
<evidence type="ECO:0000255" key="4">
    <source>
        <dbReference type="PROSITE-ProRule" id="PRU01089"/>
    </source>
</evidence>
<evidence type="ECO:0000269" key="5">
    <source>
    </source>
</evidence>
<evidence type="ECO:0000303" key="6">
    <source>
    </source>
</evidence>
<evidence type="ECO:0000305" key="7"/>
<evidence type="ECO:0000312" key="8">
    <source>
        <dbReference type="EMBL" id="AAN70585.1"/>
    </source>
</evidence>
<gene>
    <name evidence="6" type="primary">mcpQ</name>
    <name evidence="8" type="ordered locus">PP_5020</name>
</gene>
<accession>Q88D09</accession>
<organism>
    <name type="scientific">Pseudomonas putida (strain ATCC 47054 / DSM 6125 / CFBP 8728 / NCIMB 11950 / KT2440)</name>
    <dbReference type="NCBI Taxonomy" id="160488"/>
    <lineage>
        <taxon>Bacteria</taxon>
        <taxon>Pseudomonadati</taxon>
        <taxon>Pseudomonadota</taxon>
        <taxon>Gammaproteobacteria</taxon>
        <taxon>Pseudomonadales</taxon>
        <taxon>Pseudomonadaceae</taxon>
        <taxon>Pseudomonas</taxon>
    </lineage>
</organism>
<feature type="chain" id="PRO_0000438508" description="Methyl-accepting chemotaxis protein McpQ">
    <location>
        <begin position="1"/>
        <end position="638"/>
    </location>
</feature>
<feature type="transmembrane region" description="Helical" evidence="1">
    <location>
        <begin position="18"/>
        <end position="38"/>
    </location>
</feature>
<feature type="transmembrane region" description="Helical" evidence="1">
    <location>
        <begin position="287"/>
        <end position="307"/>
    </location>
</feature>
<feature type="domain" description="HBM" evidence="4">
    <location>
        <begin position="45"/>
        <end position="282"/>
    </location>
</feature>
<feature type="domain" description="HAMP" evidence="2">
    <location>
        <begin position="309"/>
        <end position="361"/>
    </location>
</feature>
<feature type="domain" description="Methyl-accepting transducer" evidence="3">
    <location>
        <begin position="366"/>
        <end position="602"/>
    </location>
</feature>
<name>MCPQ_PSEPK</name>
<sequence>MYQWLAQSLGNVSVNRKLGLGFGLVLLLTLAITLTGWHGMDSIIDRGDKLGNISVIQQYTQELRIARQQYDRRRDDASLAELEKALSNLDRQVQLMLGQIEQPADHQRLEQQREAVRIYQQAFNELKQADQRREASRDVLGSSADKAVDLIGRVQRSLLQGANINQYQHAVDVSALLQQARFQVRGYTYSGNADYQQTALKAIDQALAELRALPAKVPAEHAASLDDAATAMGGYRDAVTQFGNAQLASEQALQRMVEQGTVLLQASQMMTASQTEVRDAAAAQAKTLLTVATVLALALGLLAAWAITRQIIIPLRQTLRAAERVASGDLTQSLQVQRRDELGQLQASMHRMTQGLRELIGGIGDGVTQIASAAEELSAVTEQTSAGVNNQKVETDQVATAMNQMTATVHEVARNAEQASEAALMADQQAREGDRVVGEAVAQIERLASEVVNSSEAMNLLKTESDKIGSVLDVIKSVAQQTNLLALNAAIEAARAGEAGRGFAVVADEVRSLAQRTQQSTEEIEELIAGLQSGTQRVASVMDNSRQLTDSSVELTRRAGSSLETITRTVSSIQAMNQQIATAAEEQTAVAEEINRSVMNVRDISDQTSAASEETASSSVELARLGTHLQGLVGRFRL</sequence>
<keyword id="KW-1003">Cell membrane</keyword>
<keyword id="KW-0145">Chemotaxis</keyword>
<keyword id="KW-0472">Membrane</keyword>
<keyword id="KW-0488">Methylation</keyword>
<keyword id="KW-1185">Reference proteome</keyword>
<keyword id="KW-0807">Transducer</keyword>
<keyword id="KW-0812">Transmembrane</keyword>
<keyword id="KW-1133">Transmembrane helix</keyword>
<proteinExistence type="evidence at protein level"/>
<protein>
    <recommendedName>
        <fullName evidence="7">Methyl-accepting chemotaxis protein McpQ</fullName>
    </recommendedName>
</protein>
<comment type="function">
    <text evidence="5 7">Chemotactic-signal transducers respond to changes in the concentration of attractants and repellents in the environment, transduce a signal from the outside to the inside of the cell, and facilitate sensory adaptation through the variation of the level of methylation. McpQ recognizes specifically citrate and citrate/metal(2+) complexes. Binds citrate/metal(2+) complexes with higher affinity than free citrate, and mediates preferentially chemotaxis toward citrate/metal(2+) complexes.</text>
</comment>
<comment type="subcellular location">
    <subcellularLocation>
        <location evidence="7">Cell membrane</location>
        <topology evidence="1">Multi-pass membrane protein</topology>
    </subcellularLocation>
</comment>
<comment type="disruption phenotype">
    <text evidence="5">Deletion of the gene causes very strong reduction in the chemotaxis toward citrate/Mg(2+) complexes.</text>
</comment>
<comment type="similarity">
    <text evidence="7">Belongs to the methyl-accepting chemotaxis (MCP) protein family.</text>
</comment>